<protein>
    <recommendedName>
        <fullName evidence="1">Glutamate--tRNA ligase</fullName>
        <ecNumber evidence="1">6.1.1.17</ecNumber>
    </recommendedName>
    <alternativeName>
        <fullName evidence="1">Glutamyl-tRNA synthetase</fullName>
        <shortName evidence="1">GluRS</shortName>
    </alternativeName>
</protein>
<reference key="1">
    <citation type="journal article" date="2011" name="Appl. Environ. Microbiol.">
        <title>Genomic potential of Marinobacter aquaeolei, a biogeochemical 'opportunitroph'.</title>
        <authorList>
            <person name="Singer E."/>
            <person name="Webb E.A."/>
            <person name="Nelson W.C."/>
            <person name="Heidelberg J.F."/>
            <person name="Ivanova N."/>
            <person name="Pati A."/>
            <person name="Edwards K.J."/>
        </authorList>
    </citation>
    <scope>NUCLEOTIDE SEQUENCE [LARGE SCALE GENOMIC DNA]</scope>
    <source>
        <strain>ATCC 700491 / DSM 11845 / VT8</strain>
    </source>
</reference>
<keyword id="KW-0030">Aminoacyl-tRNA synthetase</keyword>
<keyword id="KW-0067">ATP-binding</keyword>
<keyword id="KW-0963">Cytoplasm</keyword>
<keyword id="KW-0436">Ligase</keyword>
<keyword id="KW-0547">Nucleotide-binding</keyword>
<keyword id="KW-0648">Protein biosynthesis</keyword>
<organism>
    <name type="scientific">Marinobacter nauticus (strain ATCC 700491 / DSM 11845 / VT8)</name>
    <name type="common">Marinobacter aquaeolei</name>
    <dbReference type="NCBI Taxonomy" id="351348"/>
    <lineage>
        <taxon>Bacteria</taxon>
        <taxon>Pseudomonadati</taxon>
        <taxon>Pseudomonadota</taxon>
        <taxon>Gammaproteobacteria</taxon>
        <taxon>Pseudomonadales</taxon>
        <taxon>Marinobacteraceae</taxon>
        <taxon>Marinobacter</taxon>
    </lineage>
</organism>
<sequence length="493" mass="56592">MTVRTRIAPSPTGDPHVGTAYVALFNLCFARQHGGQFILRIEDTDQARSTAESEQDILTALRWLGLNWDEGPDVGGPHGPYRQSERKHMYGQYAEDLVTAGHAFYCFRTPEELDAIREERKAQGLNPGIKGDLELPEEEVKRRLDAGDPYVIRMKVPDEGVCEIQDMLRGTIEIDWAQVDCQILLKSDGMPTYHLANVVDDHLMGITHVLRGEEWINSAPKHKLLYQYFGWDMPELCHLPLLRNPDKSKLSKRKNPTSINFYERMGFLPEAVTNYLGRMGWSMPDEREKFTLDEMIENFDIQRVSLGGPVFDVEKLRWLNGQWIREELSDEQFMARMQQWWFNQDDLKALVPHIKGRAEVFSDVAPMAQFMFSGMLNLKPEDFAHNKLDESQVKRVLQFALWKLEAQRHWSKNTIFADIKALAKAMDLKMGDFMFSIFVAIAGTPNSWSVMDSMALLGPDMTRSRLRHALEVMGGFSKKETKKVEKEYAALGV</sequence>
<feature type="chain" id="PRO_1000001921" description="Glutamate--tRNA ligase">
    <location>
        <begin position="1"/>
        <end position="493"/>
    </location>
</feature>
<feature type="short sequence motif" description="'HIGH' region" evidence="1">
    <location>
        <begin position="9"/>
        <end position="19"/>
    </location>
</feature>
<feature type="short sequence motif" description="'KMSKS' region" evidence="1">
    <location>
        <begin position="249"/>
        <end position="253"/>
    </location>
</feature>
<feature type="binding site" evidence="1">
    <location>
        <position position="252"/>
    </location>
    <ligand>
        <name>ATP</name>
        <dbReference type="ChEBI" id="CHEBI:30616"/>
    </ligand>
</feature>
<comment type="function">
    <text evidence="1">Catalyzes the attachment of glutamate to tRNA(Glu) in a two-step reaction: glutamate is first activated by ATP to form Glu-AMP and then transferred to the acceptor end of tRNA(Glu).</text>
</comment>
<comment type="catalytic activity">
    <reaction evidence="1">
        <text>tRNA(Glu) + L-glutamate + ATP = L-glutamyl-tRNA(Glu) + AMP + diphosphate</text>
        <dbReference type="Rhea" id="RHEA:23540"/>
        <dbReference type="Rhea" id="RHEA-COMP:9663"/>
        <dbReference type="Rhea" id="RHEA-COMP:9680"/>
        <dbReference type="ChEBI" id="CHEBI:29985"/>
        <dbReference type="ChEBI" id="CHEBI:30616"/>
        <dbReference type="ChEBI" id="CHEBI:33019"/>
        <dbReference type="ChEBI" id="CHEBI:78442"/>
        <dbReference type="ChEBI" id="CHEBI:78520"/>
        <dbReference type="ChEBI" id="CHEBI:456215"/>
        <dbReference type="EC" id="6.1.1.17"/>
    </reaction>
</comment>
<comment type="subunit">
    <text evidence="1">Monomer.</text>
</comment>
<comment type="subcellular location">
    <subcellularLocation>
        <location evidence="1">Cytoplasm</location>
    </subcellularLocation>
</comment>
<comment type="similarity">
    <text evidence="1">Belongs to the class-I aminoacyl-tRNA synthetase family. Glutamate--tRNA ligase type 1 subfamily.</text>
</comment>
<dbReference type="EC" id="6.1.1.17" evidence="1"/>
<dbReference type="EMBL" id="CP000514">
    <property type="protein sequence ID" value="ABM18972.1"/>
    <property type="molecule type" value="Genomic_DNA"/>
</dbReference>
<dbReference type="RefSeq" id="WP_011785365.1">
    <property type="nucleotide sequence ID" value="NC_008740.1"/>
</dbReference>
<dbReference type="SMR" id="A1U1V3"/>
<dbReference type="STRING" id="351348.Maqu_1891"/>
<dbReference type="KEGG" id="maq:Maqu_1891"/>
<dbReference type="eggNOG" id="COG0008">
    <property type="taxonomic scope" value="Bacteria"/>
</dbReference>
<dbReference type="HOGENOM" id="CLU_015768_6_3_6"/>
<dbReference type="OrthoDB" id="9807503at2"/>
<dbReference type="Proteomes" id="UP000000998">
    <property type="component" value="Chromosome"/>
</dbReference>
<dbReference type="GO" id="GO:0005829">
    <property type="term" value="C:cytosol"/>
    <property type="evidence" value="ECO:0007669"/>
    <property type="project" value="TreeGrafter"/>
</dbReference>
<dbReference type="GO" id="GO:0005524">
    <property type="term" value="F:ATP binding"/>
    <property type="evidence" value="ECO:0007669"/>
    <property type="project" value="UniProtKB-UniRule"/>
</dbReference>
<dbReference type="GO" id="GO:0004818">
    <property type="term" value="F:glutamate-tRNA ligase activity"/>
    <property type="evidence" value="ECO:0007669"/>
    <property type="project" value="UniProtKB-UniRule"/>
</dbReference>
<dbReference type="GO" id="GO:0000049">
    <property type="term" value="F:tRNA binding"/>
    <property type="evidence" value="ECO:0007669"/>
    <property type="project" value="InterPro"/>
</dbReference>
<dbReference type="GO" id="GO:0008270">
    <property type="term" value="F:zinc ion binding"/>
    <property type="evidence" value="ECO:0007669"/>
    <property type="project" value="InterPro"/>
</dbReference>
<dbReference type="GO" id="GO:0006424">
    <property type="term" value="P:glutamyl-tRNA aminoacylation"/>
    <property type="evidence" value="ECO:0007669"/>
    <property type="project" value="UniProtKB-UniRule"/>
</dbReference>
<dbReference type="CDD" id="cd00808">
    <property type="entry name" value="GluRS_core"/>
    <property type="match status" value="1"/>
</dbReference>
<dbReference type="FunFam" id="3.40.50.620:FF:000045">
    <property type="entry name" value="Glutamate--tRNA ligase, mitochondrial"/>
    <property type="match status" value="1"/>
</dbReference>
<dbReference type="Gene3D" id="1.10.10.350">
    <property type="match status" value="1"/>
</dbReference>
<dbReference type="Gene3D" id="3.40.50.620">
    <property type="entry name" value="HUPs"/>
    <property type="match status" value="1"/>
</dbReference>
<dbReference type="HAMAP" id="MF_00022">
    <property type="entry name" value="Glu_tRNA_synth_type1"/>
    <property type="match status" value="1"/>
</dbReference>
<dbReference type="InterPro" id="IPR045462">
    <property type="entry name" value="aa-tRNA-synth_I_cd-bd"/>
</dbReference>
<dbReference type="InterPro" id="IPR020751">
    <property type="entry name" value="aa-tRNA-synth_I_codon-bd_sub2"/>
</dbReference>
<dbReference type="InterPro" id="IPR001412">
    <property type="entry name" value="aa-tRNA-synth_I_CS"/>
</dbReference>
<dbReference type="InterPro" id="IPR008925">
    <property type="entry name" value="aa_tRNA-synth_I_cd-bd_sf"/>
</dbReference>
<dbReference type="InterPro" id="IPR004527">
    <property type="entry name" value="Glu-tRNA-ligase_bac/mito"/>
</dbReference>
<dbReference type="InterPro" id="IPR000924">
    <property type="entry name" value="Glu/Gln-tRNA-synth"/>
</dbReference>
<dbReference type="InterPro" id="IPR020058">
    <property type="entry name" value="Glu/Gln-tRNA-synth_Ib_cat-dom"/>
</dbReference>
<dbReference type="InterPro" id="IPR049940">
    <property type="entry name" value="GluQ/Sye"/>
</dbReference>
<dbReference type="InterPro" id="IPR033910">
    <property type="entry name" value="GluRS_core"/>
</dbReference>
<dbReference type="InterPro" id="IPR014729">
    <property type="entry name" value="Rossmann-like_a/b/a_fold"/>
</dbReference>
<dbReference type="NCBIfam" id="TIGR00464">
    <property type="entry name" value="gltX_bact"/>
    <property type="match status" value="1"/>
</dbReference>
<dbReference type="PANTHER" id="PTHR43311">
    <property type="entry name" value="GLUTAMATE--TRNA LIGASE"/>
    <property type="match status" value="1"/>
</dbReference>
<dbReference type="PANTHER" id="PTHR43311:SF2">
    <property type="entry name" value="GLUTAMATE--TRNA LIGASE, MITOCHONDRIAL-RELATED"/>
    <property type="match status" value="1"/>
</dbReference>
<dbReference type="Pfam" id="PF19269">
    <property type="entry name" value="Anticodon_2"/>
    <property type="match status" value="1"/>
</dbReference>
<dbReference type="Pfam" id="PF00749">
    <property type="entry name" value="tRNA-synt_1c"/>
    <property type="match status" value="1"/>
</dbReference>
<dbReference type="PRINTS" id="PR00987">
    <property type="entry name" value="TRNASYNTHGLU"/>
</dbReference>
<dbReference type="SUPFAM" id="SSF48163">
    <property type="entry name" value="An anticodon-binding domain of class I aminoacyl-tRNA synthetases"/>
    <property type="match status" value="1"/>
</dbReference>
<dbReference type="SUPFAM" id="SSF52374">
    <property type="entry name" value="Nucleotidylyl transferase"/>
    <property type="match status" value="1"/>
</dbReference>
<dbReference type="PROSITE" id="PS00178">
    <property type="entry name" value="AA_TRNA_LIGASE_I"/>
    <property type="match status" value="1"/>
</dbReference>
<evidence type="ECO:0000255" key="1">
    <source>
        <dbReference type="HAMAP-Rule" id="MF_00022"/>
    </source>
</evidence>
<accession>A1U1V3</accession>
<gene>
    <name evidence="1" type="primary">gltX</name>
    <name type="ordered locus">Maqu_1891</name>
</gene>
<proteinExistence type="inferred from homology"/>
<name>SYE_MARN8</name>